<feature type="chain" id="PRO_1000020806" description="Glycerol kinase">
    <location>
        <begin position="1"/>
        <end position="498"/>
    </location>
</feature>
<feature type="binding site" evidence="1">
    <location>
        <position position="13"/>
    </location>
    <ligand>
        <name>ADP</name>
        <dbReference type="ChEBI" id="CHEBI:456216"/>
    </ligand>
</feature>
<feature type="binding site" evidence="1">
    <location>
        <position position="13"/>
    </location>
    <ligand>
        <name>ATP</name>
        <dbReference type="ChEBI" id="CHEBI:30616"/>
    </ligand>
</feature>
<feature type="binding site" evidence="1">
    <location>
        <position position="13"/>
    </location>
    <ligand>
        <name>sn-glycerol 3-phosphate</name>
        <dbReference type="ChEBI" id="CHEBI:57597"/>
    </ligand>
</feature>
<feature type="binding site" evidence="1">
    <location>
        <position position="14"/>
    </location>
    <ligand>
        <name>ATP</name>
        <dbReference type="ChEBI" id="CHEBI:30616"/>
    </ligand>
</feature>
<feature type="binding site" evidence="1">
    <location>
        <position position="15"/>
    </location>
    <ligand>
        <name>ATP</name>
        <dbReference type="ChEBI" id="CHEBI:30616"/>
    </ligand>
</feature>
<feature type="binding site" evidence="1">
    <location>
        <position position="17"/>
    </location>
    <ligand>
        <name>ADP</name>
        <dbReference type="ChEBI" id="CHEBI:456216"/>
    </ligand>
</feature>
<feature type="binding site" evidence="1">
    <location>
        <position position="83"/>
    </location>
    <ligand>
        <name>glycerol</name>
        <dbReference type="ChEBI" id="CHEBI:17754"/>
    </ligand>
</feature>
<feature type="binding site" evidence="1">
    <location>
        <position position="83"/>
    </location>
    <ligand>
        <name>sn-glycerol 3-phosphate</name>
        <dbReference type="ChEBI" id="CHEBI:57597"/>
    </ligand>
</feature>
<feature type="binding site" evidence="1">
    <location>
        <position position="84"/>
    </location>
    <ligand>
        <name>glycerol</name>
        <dbReference type="ChEBI" id="CHEBI:17754"/>
    </ligand>
</feature>
<feature type="binding site" evidence="1">
    <location>
        <position position="84"/>
    </location>
    <ligand>
        <name>sn-glycerol 3-phosphate</name>
        <dbReference type="ChEBI" id="CHEBI:57597"/>
    </ligand>
</feature>
<feature type="binding site" evidence="1">
    <location>
        <position position="135"/>
    </location>
    <ligand>
        <name>glycerol</name>
        <dbReference type="ChEBI" id="CHEBI:17754"/>
    </ligand>
</feature>
<feature type="binding site" evidence="1">
    <location>
        <position position="135"/>
    </location>
    <ligand>
        <name>sn-glycerol 3-phosphate</name>
        <dbReference type="ChEBI" id="CHEBI:57597"/>
    </ligand>
</feature>
<feature type="binding site" evidence="1">
    <location>
        <position position="244"/>
    </location>
    <ligand>
        <name>glycerol</name>
        <dbReference type="ChEBI" id="CHEBI:17754"/>
    </ligand>
</feature>
<feature type="binding site" evidence="1">
    <location>
        <position position="244"/>
    </location>
    <ligand>
        <name>sn-glycerol 3-phosphate</name>
        <dbReference type="ChEBI" id="CHEBI:57597"/>
    </ligand>
</feature>
<feature type="binding site" evidence="1">
    <location>
        <position position="245"/>
    </location>
    <ligand>
        <name>glycerol</name>
        <dbReference type="ChEBI" id="CHEBI:17754"/>
    </ligand>
</feature>
<feature type="binding site" evidence="1">
    <location>
        <position position="266"/>
    </location>
    <ligand>
        <name>ADP</name>
        <dbReference type="ChEBI" id="CHEBI:456216"/>
    </ligand>
</feature>
<feature type="binding site" evidence="1">
    <location>
        <position position="266"/>
    </location>
    <ligand>
        <name>ATP</name>
        <dbReference type="ChEBI" id="CHEBI:30616"/>
    </ligand>
</feature>
<feature type="binding site" evidence="1">
    <location>
        <position position="309"/>
    </location>
    <ligand>
        <name>ADP</name>
        <dbReference type="ChEBI" id="CHEBI:456216"/>
    </ligand>
</feature>
<feature type="binding site" evidence="1">
    <location>
        <position position="309"/>
    </location>
    <ligand>
        <name>ATP</name>
        <dbReference type="ChEBI" id="CHEBI:30616"/>
    </ligand>
</feature>
<feature type="binding site" evidence="1">
    <location>
        <position position="313"/>
    </location>
    <ligand>
        <name>ATP</name>
        <dbReference type="ChEBI" id="CHEBI:30616"/>
    </ligand>
</feature>
<feature type="binding site" evidence="1">
    <location>
        <position position="410"/>
    </location>
    <ligand>
        <name>ADP</name>
        <dbReference type="ChEBI" id="CHEBI:456216"/>
    </ligand>
</feature>
<feature type="binding site" evidence="1">
    <location>
        <position position="410"/>
    </location>
    <ligand>
        <name>ATP</name>
        <dbReference type="ChEBI" id="CHEBI:30616"/>
    </ligand>
</feature>
<feature type="binding site" evidence="1">
    <location>
        <position position="414"/>
    </location>
    <ligand>
        <name>ADP</name>
        <dbReference type="ChEBI" id="CHEBI:456216"/>
    </ligand>
</feature>
<gene>
    <name evidence="1" type="primary">glpK</name>
    <name type="ordered locus">STH1195</name>
</gene>
<sequence>MNKGYVLALDQGTTSSRAILFNRDGRLVGQVNHEFRQIYPQPGWVEHDPREIWSTQLRAVQDVLARTGVRLSEVAAIGITNQRETTVVWDAETGEPVYNAIVWQCRRTAPICAELAARGWAPRIREKTGLVIDAYFSGTKVKWILDNVPGVREKAEQGRLRFGTIDAWLIWNLTGGRVHATDYSNASRTMLFNIHQLAWDEEILHELGIPASLLPRALPSSHVYGETDPAVLGAAIPIAGVAGDQQAALFGQACFQPGDAKNTYGTGCFMLMNTGDRAVPSESGLLTTIAWGIGDRVEYALEGSIFIGGAAVQWLRDELRFFDRAADSEALALSVPDSGGVYVVPAFVGLGAPYWDMYARGIVVGLTRGTGRAHITRATLESIAYQTRDVLGAMEKDSGIRLNRLKVDGGAVANNFLMQFQSDILGVPVERPKIAETTALGAAYLAGLATGFWRSQAELADKWALDRGFTPALPAEERERLYAGWRRAVERARGWAAE</sequence>
<evidence type="ECO:0000255" key="1">
    <source>
        <dbReference type="HAMAP-Rule" id="MF_00186"/>
    </source>
</evidence>
<proteinExistence type="inferred from homology"/>
<dbReference type="EC" id="2.7.1.30" evidence="1"/>
<dbReference type="EMBL" id="AP006840">
    <property type="protein sequence ID" value="BAD40180.1"/>
    <property type="molecule type" value="Genomic_DNA"/>
</dbReference>
<dbReference type="RefSeq" id="WP_011195326.1">
    <property type="nucleotide sequence ID" value="NC_006177.1"/>
</dbReference>
<dbReference type="SMR" id="Q67Q63"/>
<dbReference type="STRING" id="292459.STH1195"/>
<dbReference type="KEGG" id="sth:STH1195"/>
<dbReference type="eggNOG" id="COG0554">
    <property type="taxonomic scope" value="Bacteria"/>
</dbReference>
<dbReference type="HOGENOM" id="CLU_009281_2_3_9"/>
<dbReference type="OrthoDB" id="9805576at2"/>
<dbReference type="UniPathway" id="UPA00618">
    <property type="reaction ID" value="UER00672"/>
</dbReference>
<dbReference type="Proteomes" id="UP000000417">
    <property type="component" value="Chromosome"/>
</dbReference>
<dbReference type="GO" id="GO:0005829">
    <property type="term" value="C:cytosol"/>
    <property type="evidence" value="ECO:0007669"/>
    <property type="project" value="TreeGrafter"/>
</dbReference>
<dbReference type="GO" id="GO:0005524">
    <property type="term" value="F:ATP binding"/>
    <property type="evidence" value="ECO:0007669"/>
    <property type="project" value="UniProtKB-UniRule"/>
</dbReference>
<dbReference type="GO" id="GO:0004370">
    <property type="term" value="F:glycerol kinase activity"/>
    <property type="evidence" value="ECO:0000250"/>
    <property type="project" value="UniProtKB"/>
</dbReference>
<dbReference type="GO" id="GO:0019563">
    <property type="term" value="P:glycerol catabolic process"/>
    <property type="evidence" value="ECO:0007669"/>
    <property type="project" value="UniProtKB-UniRule"/>
</dbReference>
<dbReference type="GO" id="GO:0006071">
    <property type="term" value="P:glycerol metabolic process"/>
    <property type="evidence" value="ECO:0000250"/>
    <property type="project" value="UniProtKB"/>
</dbReference>
<dbReference type="GO" id="GO:0006072">
    <property type="term" value="P:glycerol-3-phosphate metabolic process"/>
    <property type="evidence" value="ECO:0007669"/>
    <property type="project" value="InterPro"/>
</dbReference>
<dbReference type="CDD" id="cd07786">
    <property type="entry name" value="FGGY_EcGK_like"/>
    <property type="match status" value="1"/>
</dbReference>
<dbReference type="FunFam" id="3.30.420.40:FF:000007">
    <property type="entry name" value="Glycerol kinase"/>
    <property type="match status" value="1"/>
</dbReference>
<dbReference type="FunFam" id="3.30.420.40:FF:000008">
    <property type="entry name" value="Glycerol kinase"/>
    <property type="match status" value="1"/>
</dbReference>
<dbReference type="Gene3D" id="3.30.420.40">
    <property type="match status" value="2"/>
</dbReference>
<dbReference type="HAMAP" id="MF_00186">
    <property type="entry name" value="Glycerol_kin"/>
    <property type="match status" value="1"/>
</dbReference>
<dbReference type="InterPro" id="IPR043129">
    <property type="entry name" value="ATPase_NBD"/>
</dbReference>
<dbReference type="InterPro" id="IPR000577">
    <property type="entry name" value="Carb_kinase_FGGY"/>
</dbReference>
<dbReference type="InterPro" id="IPR018483">
    <property type="entry name" value="Carb_kinase_FGGY_CS"/>
</dbReference>
<dbReference type="InterPro" id="IPR018485">
    <property type="entry name" value="FGGY_C"/>
</dbReference>
<dbReference type="InterPro" id="IPR018484">
    <property type="entry name" value="FGGY_N"/>
</dbReference>
<dbReference type="InterPro" id="IPR005999">
    <property type="entry name" value="Glycerol_kin"/>
</dbReference>
<dbReference type="NCBIfam" id="TIGR01311">
    <property type="entry name" value="glycerol_kin"/>
    <property type="match status" value="1"/>
</dbReference>
<dbReference type="NCBIfam" id="NF000756">
    <property type="entry name" value="PRK00047.1"/>
    <property type="match status" value="1"/>
</dbReference>
<dbReference type="PANTHER" id="PTHR10196:SF69">
    <property type="entry name" value="GLYCEROL KINASE"/>
    <property type="match status" value="1"/>
</dbReference>
<dbReference type="PANTHER" id="PTHR10196">
    <property type="entry name" value="SUGAR KINASE"/>
    <property type="match status" value="1"/>
</dbReference>
<dbReference type="Pfam" id="PF02782">
    <property type="entry name" value="FGGY_C"/>
    <property type="match status" value="1"/>
</dbReference>
<dbReference type="Pfam" id="PF00370">
    <property type="entry name" value="FGGY_N"/>
    <property type="match status" value="1"/>
</dbReference>
<dbReference type="PIRSF" id="PIRSF000538">
    <property type="entry name" value="GlpK"/>
    <property type="match status" value="1"/>
</dbReference>
<dbReference type="SUPFAM" id="SSF53067">
    <property type="entry name" value="Actin-like ATPase domain"/>
    <property type="match status" value="2"/>
</dbReference>
<dbReference type="PROSITE" id="PS00933">
    <property type="entry name" value="FGGY_KINASES_1"/>
    <property type="match status" value="1"/>
</dbReference>
<dbReference type="PROSITE" id="PS00445">
    <property type="entry name" value="FGGY_KINASES_2"/>
    <property type="match status" value="1"/>
</dbReference>
<protein>
    <recommendedName>
        <fullName evidence="1">Glycerol kinase</fullName>
        <ecNumber evidence="1">2.7.1.30</ecNumber>
    </recommendedName>
    <alternativeName>
        <fullName evidence="1">ATP:glycerol 3-phosphotransferase</fullName>
    </alternativeName>
    <alternativeName>
        <fullName evidence="1">Glycerokinase</fullName>
        <shortName evidence="1">GK</shortName>
    </alternativeName>
</protein>
<organism>
    <name type="scientific">Symbiobacterium thermophilum (strain DSM 24528 / JCM 14929 / IAM 14863 / T)</name>
    <dbReference type="NCBI Taxonomy" id="292459"/>
    <lineage>
        <taxon>Bacteria</taxon>
        <taxon>Bacillati</taxon>
        <taxon>Bacillota</taxon>
        <taxon>Clostridia</taxon>
        <taxon>Eubacteriales</taxon>
        <taxon>Symbiobacteriaceae</taxon>
        <taxon>Symbiobacterium</taxon>
    </lineage>
</organism>
<reference key="1">
    <citation type="journal article" date="2004" name="Nucleic Acids Res.">
        <title>Genome sequence of Symbiobacterium thermophilum, an uncultivable bacterium that depends on microbial commensalism.</title>
        <authorList>
            <person name="Ueda K."/>
            <person name="Yamashita A."/>
            <person name="Ishikawa J."/>
            <person name="Shimada M."/>
            <person name="Watsuji T."/>
            <person name="Morimura K."/>
            <person name="Ikeda H."/>
            <person name="Hattori M."/>
            <person name="Beppu T."/>
        </authorList>
    </citation>
    <scope>NUCLEOTIDE SEQUENCE [LARGE SCALE GENOMIC DNA]</scope>
    <source>
        <strain>DSM 24528 / JCM 14929 / IAM 14863 / T</strain>
    </source>
</reference>
<comment type="function">
    <text evidence="1">Key enzyme in the regulation of glycerol uptake and metabolism. Catalyzes the phosphorylation of glycerol to yield sn-glycerol 3-phosphate.</text>
</comment>
<comment type="catalytic activity">
    <reaction evidence="1">
        <text>glycerol + ATP = sn-glycerol 3-phosphate + ADP + H(+)</text>
        <dbReference type="Rhea" id="RHEA:21644"/>
        <dbReference type="ChEBI" id="CHEBI:15378"/>
        <dbReference type="ChEBI" id="CHEBI:17754"/>
        <dbReference type="ChEBI" id="CHEBI:30616"/>
        <dbReference type="ChEBI" id="CHEBI:57597"/>
        <dbReference type="ChEBI" id="CHEBI:456216"/>
        <dbReference type="EC" id="2.7.1.30"/>
    </reaction>
</comment>
<comment type="activity regulation">
    <text evidence="1">Activated by phosphorylation and inhibited by fructose 1,6-bisphosphate (FBP).</text>
</comment>
<comment type="pathway">
    <text evidence="1">Polyol metabolism; glycerol degradation via glycerol kinase pathway; sn-glycerol 3-phosphate from glycerol: step 1/1.</text>
</comment>
<comment type="subunit">
    <text evidence="1">Homotetramer and homodimer (in equilibrium).</text>
</comment>
<comment type="similarity">
    <text evidence="1">Belongs to the FGGY kinase family.</text>
</comment>
<accession>Q67Q63</accession>
<keyword id="KW-0067">ATP-binding</keyword>
<keyword id="KW-0319">Glycerol metabolism</keyword>
<keyword id="KW-0418">Kinase</keyword>
<keyword id="KW-0547">Nucleotide-binding</keyword>
<keyword id="KW-1185">Reference proteome</keyword>
<keyword id="KW-0808">Transferase</keyword>
<name>GLPK_SYMTH</name>